<proteinExistence type="inferred from homology"/>
<feature type="chain" id="PRO_0000277956" description="Large ribosomal subunit protein bL34">
    <location>
        <begin position="1"/>
        <end position="44"/>
    </location>
</feature>
<reference key="1">
    <citation type="journal article" date="2006" name="PLoS Genet.">
        <title>Genome sequence of Rickettsia bellii illuminates the role of amoebae in gene exchanges between intracellular pathogens.</title>
        <authorList>
            <person name="Ogata H."/>
            <person name="La Scola B."/>
            <person name="Audic S."/>
            <person name="Renesto P."/>
            <person name="Blanc G."/>
            <person name="Robert C."/>
            <person name="Fournier P.-E."/>
            <person name="Claverie J.-M."/>
            <person name="Raoult D."/>
        </authorList>
    </citation>
    <scope>NUCLEOTIDE SEQUENCE [LARGE SCALE GENOMIC DNA]</scope>
    <source>
        <strain>RML369-C</strain>
    </source>
</reference>
<dbReference type="EMBL" id="CP000087">
    <property type="protein sequence ID" value="ABE04947.1"/>
    <property type="molecule type" value="Genomic_DNA"/>
</dbReference>
<dbReference type="RefSeq" id="WP_011477532.1">
    <property type="nucleotide sequence ID" value="NC_007940.1"/>
</dbReference>
<dbReference type="SMR" id="Q1RI67"/>
<dbReference type="KEGG" id="rbe:RBE_0866"/>
<dbReference type="eggNOG" id="COG0230">
    <property type="taxonomic scope" value="Bacteria"/>
</dbReference>
<dbReference type="HOGENOM" id="CLU_129938_2_0_5"/>
<dbReference type="OrthoDB" id="9804164at2"/>
<dbReference type="Proteomes" id="UP000001951">
    <property type="component" value="Chromosome"/>
</dbReference>
<dbReference type="GO" id="GO:1990904">
    <property type="term" value="C:ribonucleoprotein complex"/>
    <property type="evidence" value="ECO:0007669"/>
    <property type="project" value="UniProtKB-KW"/>
</dbReference>
<dbReference type="GO" id="GO:0005840">
    <property type="term" value="C:ribosome"/>
    <property type="evidence" value="ECO:0007669"/>
    <property type="project" value="UniProtKB-KW"/>
</dbReference>
<dbReference type="GO" id="GO:0003735">
    <property type="term" value="F:structural constituent of ribosome"/>
    <property type="evidence" value="ECO:0007669"/>
    <property type="project" value="InterPro"/>
</dbReference>
<dbReference type="GO" id="GO:0006412">
    <property type="term" value="P:translation"/>
    <property type="evidence" value="ECO:0007669"/>
    <property type="project" value="UniProtKB-UniRule"/>
</dbReference>
<dbReference type="FunFam" id="1.10.287.3980:FF:000001">
    <property type="entry name" value="Mitochondrial ribosomal protein L34"/>
    <property type="match status" value="1"/>
</dbReference>
<dbReference type="Gene3D" id="1.10.287.3980">
    <property type="match status" value="1"/>
</dbReference>
<dbReference type="HAMAP" id="MF_00391">
    <property type="entry name" value="Ribosomal_bL34"/>
    <property type="match status" value="1"/>
</dbReference>
<dbReference type="InterPro" id="IPR000271">
    <property type="entry name" value="Ribosomal_bL34"/>
</dbReference>
<dbReference type="InterPro" id="IPR020939">
    <property type="entry name" value="Ribosomal_bL34_CS"/>
</dbReference>
<dbReference type="NCBIfam" id="TIGR01030">
    <property type="entry name" value="rpmH_bact"/>
    <property type="match status" value="1"/>
</dbReference>
<dbReference type="PANTHER" id="PTHR14503:SF4">
    <property type="entry name" value="LARGE RIBOSOMAL SUBUNIT PROTEIN BL34M"/>
    <property type="match status" value="1"/>
</dbReference>
<dbReference type="PANTHER" id="PTHR14503">
    <property type="entry name" value="MITOCHONDRIAL RIBOSOMAL PROTEIN 34 FAMILY MEMBER"/>
    <property type="match status" value="1"/>
</dbReference>
<dbReference type="Pfam" id="PF00468">
    <property type="entry name" value="Ribosomal_L34"/>
    <property type="match status" value="1"/>
</dbReference>
<dbReference type="PROSITE" id="PS00784">
    <property type="entry name" value="RIBOSOMAL_L34"/>
    <property type="match status" value="1"/>
</dbReference>
<comment type="similarity">
    <text evidence="1">Belongs to the bacterial ribosomal protein bL34 family.</text>
</comment>
<accession>Q1RI67</accession>
<name>RL34_RICBR</name>
<protein>
    <recommendedName>
        <fullName evidence="1">Large ribosomal subunit protein bL34</fullName>
    </recommendedName>
    <alternativeName>
        <fullName evidence="2">50S ribosomal protein L34</fullName>
    </alternativeName>
</protein>
<sequence length="44" mass="5137">MKRTFQPSNLVRKRRHGFRARMATASGRAILRNRRAKGRKKLSA</sequence>
<evidence type="ECO:0000255" key="1">
    <source>
        <dbReference type="HAMAP-Rule" id="MF_00391"/>
    </source>
</evidence>
<evidence type="ECO:0000305" key="2"/>
<keyword id="KW-0687">Ribonucleoprotein</keyword>
<keyword id="KW-0689">Ribosomal protein</keyword>
<gene>
    <name evidence="1" type="primary">rpmH</name>
    <name type="ordered locus">RBE_0866</name>
</gene>
<organism>
    <name type="scientific">Rickettsia bellii (strain RML369-C)</name>
    <dbReference type="NCBI Taxonomy" id="336407"/>
    <lineage>
        <taxon>Bacteria</taxon>
        <taxon>Pseudomonadati</taxon>
        <taxon>Pseudomonadota</taxon>
        <taxon>Alphaproteobacteria</taxon>
        <taxon>Rickettsiales</taxon>
        <taxon>Rickettsiaceae</taxon>
        <taxon>Rickettsieae</taxon>
        <taxon>Rickettsia</taxon>
        <taxon>belli group</taxon>
    </lineage>
</organism>